<organism>
    <name type="scientific">Brevibacillus brevis (strain 47 / JCM 6285 / NBRC 100599)</name>
    <dbReference type="NCBI Taxonomy" id="358681"/>
    <lineage>
        <taxon>Bacteria</taxon>
        <taxon>Bacillati</taxon>
        <taxon>Bacillota</taxon>
        <taxon>Bacilli</taxon>
        <taxon>Bacillales</taxon>
        <taxon>Paenibacillaceae</taxon>
        <taxon>Brevibacillus</taxon>
    </lineage>
</organism>
<keyword id="KW-0963">Cytoplasm</keyword>
<keyword id="KW-0328">Glycosyltransferase</keyword>
<keyword id="KW-0660">Purine salvage</keyword>
<keyword id="KW-1185">Reference proteome</keyword>
<keyword id="KW-0808">Transferase</keyword>
<comment type="function">
    <text evidence="1">Converts the preformed base xanthine, a product of nucleic acid breakdown, to xanthosine 5'-monophosphate (XMP), so it can be reused for RNA or DNA synthesis.</text>
</comment>
<comment type="catalytic activity">
    <reaction evidence="1">
        <text>XMP + diphosphate = xanthine + 5-phospho-alpha-D-ribose 1-diphosphate</text>
        <dbReference type="Rhea" id="RHEA:10800"/>
        <dbReference type="ChEBI" id="CHEBI:17712"/>
        <dbReference type="ChEBI" id="CHEBI:33019"/>
        <dbReference type="ChEBI" id="CHEBI:57464"/>
        <dbReference type="ChEBI" id="CHEBI:58017"/>
        <dbReference type="EC" id="2.4.2.22"/>
    </reaction>
</comment>
<comment type="pathway">
    <text evidence="1">Purine metabolism; XMP biosynthesis via salvage pathway; XMP from xanthine: step 1/1.</text>
</comment>
<comment type="subunit">
    <text evidence="1">Homodimer.</text>
</comment>
<comment type="subcellular location">
    <subcellularLocation>
        <location evidence="1">Cytoplasm</location>
    </subcellularLocation>
</comment>
<comment type="similarity">
    <text evidence="1">Belongs to the purine/pyrimidine phosphoribosyltransferase family. Xpt subfamily.</text>
</comment>
<sequence length="196" mass="21489">MKELQERIVQDGKVLSASVLKVDAFLNHQVDPQLTMKIGQRFAELFAGENITKVVTIEASGIHFAMATSFALGVPFIYAKKKKAVTLTEEVYSAPVHSFTRQETYQISVSRQYLSKEDRVLIVDDFLATGAALVGLTNIVKDAGAHLVGVGAVIEKSFQEGRGLLEQAGVRIESLARIESMSPEGIHFIEEEPARV</sequence>
<feature type="chain" id="PRO_1000213764" description="Xanthine phosphoribosyltransferase">
    <location>
        <begin position="1"/>
        <end position="196"/>
    </location>
</feature>
<feature type="binding site" evidence="1">
    <location>
        <position position="20"/>
    </location>
    <ligand>
        <name>xanthine</name>
        <dbReference type="ChEBI" id="CHEBI:17712"/>
    </ligand>
</feature>
<feature type="binding site" evidence="1">
    <location>
        <position position="27"/>
    </location>
    <ligand>
        <name>xanthine</name>
        <dbReference type="ChEBI" id="CHEBI:17712"/>
    </ligand>
</feature>
<feature type="binding site" evidence="1">
    <location>
        <begin position="128"/>
        <end position="132"/>
    </location>
    <ligand>
        <name>5-phospho-alpha-D-ribose 1-diphosphate</name>
        <dbReference type="ChEBI" id="CHEBI:58017"/>
    </ligand>
</feature>
<feature type="binding site" evidence="1">
    <location>
        <position position="156"/>
    </location>
    <ligand>
        <name>xanthine</name>
        <dbReference type="ChEBI" id="CHEBI:17712"/>
    </ligand>
</feature>
<proteinExistence type="inferred from homology"/>
<evidence type="ECO:0000255" key="1">
    <source>
        <dbReference type="HAMAP-Rule" id="MF_01184"/>
    </source>
</evidence>
<gene>
    <name evidence="1" type="primary">xpt</name>
    <name type="ordered locus">BBR47_44140</name>
</gene>
<accession>C0ZJ16</accession>
<dbReference type="EC" id="2.4.2.22" evidence="1"/>
<dbReference type="EMBL" id="AP008955">
    <property type="protein sequence ID" value="BAH45391.1"/>
    <property type="molecule type" value="Genomic_DNA"/>
</dbReference>
<dbReference type="RefSeq" id="WP_015892653.1">
    <property type="nucleotide sequence ID" value="NC_012491.1"/>
</dbReference>
<dbReference type="SMR" id="C0ZJ16"/>
<dbReference type="STRING" id="358681.BBR47_44140"/>
<dbReference type="KEGG" id="bbe:BBR47_44140"/>
<dbReference type="eggNOG" id="COG0503">
    <property type="taxonomic scope" value="Bacteria"/>
</dbReference>
<dbReference type="HOGENOM" id="CLU_099015_0_0_9"/>
<dbReference type="UniPathway" id="UPA00602">
    <property type="reaction ID" value="UER00658"/>
</dbReference>
<dbReference type="Proteomes" id="UP000001877">
    <property type="component" value="Chromosome"/>
</dbReference>
<dbReference type="GO" id="GO:0005737">
    <property type="term" value="C:cytoplasm"/>
    <property type="evidence" value="ECO:0007669"/>
    <property type="project" value="UniProtKB-SubCell"/>
</dbReference>
<dbReference type="GO" id="GO:0000310">
    <property type="term" value="F:xanthine phosphoribosyltransferase activity"/>
    <property type="evidence" value="ECO:0007669"/>
    <property type="project" value="UniProtKB-UniRule"/>
</dbReference>
<dbReference type="GO" id="GO:0006166">
    <property type="term" value="P:purine ribonucleoside salvage"/>
    <property type="evidence" value="ECO:0007669"/>
    <property type="project" value="UniProtKB-KW"/>
</dbReference>
<dbReference type="GO" id="GO:0046110">
    <property type="term" value="P:xanthine metabolic process"/>
    <property type="evidence" value="ECO:0007669"/>
    <property type="project" value="InterPro"/>
</dbReference>
<dbReference type="GO" id="GO:0032265">
    <property type="term" value="P:XMP salvage"/>
    <property type="evidence" value="ECO:0007669"/>
    <property type="project" value="UniProtKB-UniRule"/>
</dbReference>
<dbReference type="CDD" id="cd06223">
    <property type="entry name" value="PRTases_typeI"/>
    <property type="match status" value="1"/>
</dbReference>
<dbReference type="Gene3D" id="3.40.50.2020">
    <property type="match status" value="1"/>
</dbReference>
<dbReference type="HAMAP" id="MF_01184">
    <property type="entry name" value="XPRTase"/>
    <property type="match status" value="1"/>
</dbReference>
<dbReference type="InterPro" id="IPR000836">
    <property type="entry name" value="PRibTrfase_dom"/>
</dbReference>
<dbReference type="InterPro" id="IPR029057">
    <property type="entry name" value="PRTase-like"/>
</dbReference>
<dbReference type="InterPro" id="IPR050118">
    <property type="entry name" value="Pur/Pyrimidine_PRTase"/>
</dbReference>
<dbReference type="InterPro" id="IPR010079">
    <property type="entry name" value="Xanthine_PRibTrfase"/>
</dbReference>
<dbReference type="NCBIfam" id="NF006671">
    <property type="entry name" value="PRK09219.1"/>
    <property type="match status" value="1"/>
</dbReference>
<dbReference type="NCBIfam" id="TIGR01744">
    <property type="entry name" value="XPRTase"/>
    <property type="match status" value="1"/>
</dbReference>
<dbReference type="PANTHER" id="PTHR43864">
    <property type="entry name" value="HYPOXANTHINE/GUANINE PHOSPHORIBOSYLTRANSFERASE"/>
    <property type="match status" value="1"/>
</dbReference>
<dbReference type="PANTHER" id="PTHR43864:SF1">
    <property type="entry name" value="XANTHINE PHOSPHORIBOSYLTRANSFERASE"/>
    <property type="match status" value="1"/>
</dbReference>
<dbReference type="Pfam" id="PF00156">
    <property type="entry name" value="Pribosyltran"/>
    <property type="match status" value="1"/>
</dbReference>
<dbReference type="SUPFAM" id="SSF53271">
    <property type="entry name" value="PRTase-like"/>
    <property type="match status" value="1"/>
</dbReference>
<protein>
    <recommendedName>
        <fullName evidence="1">Xanthine phosphoribosyltransferase</fullName>
        <shortName evidence="1">XPRTase</shortName>
        <ecNumber evidence="1">2.4.2.22</ecNumber>
    </recommendedName>
</protein>
<reference key="1">
    <citation type="submission" date="2005-03" db="EMBL/GenBank/DDBJ databases">
        <title>Brevibacillus brevis strain 47, complete genome.</title>
        <authorList>
            <person name="Hosoyama A."/>
            <person name="Yamada R."/>
            <person name="Hongo Y."/>
            <person name="Terui Y."/>
            <person name="Ankai A."/>
            <person name="Masuyama W."/>
            <person name="Sekiguchi M."/>
            <person name="Takeda T."/>
            <person name="Asano K."/>
            <person name="Ohji S."/>
            <person name="Ichikawa N."/>
            <person name="Narita S."/>
            <person name="Aoki N."/>
            <person name="Miura H."/>
            <person name="Matsushita S."/>
            <person name="Sekigawa T."/>
            <person name="Yamagata H."/>
            <person name="Yoshikawa H."/>
            <person name="Udaka S."/>
            <person name="Tanikawa S."/>
            <person name="Fujita N."/>
        </authorList>
    </citation>
    <scope>NUCLEOTIDE SEQUENCE [LARGE SCALE GENOMIC DNA]</scope>
    <source>
        <strain>47 / JCM 6285 / NBRC 100599</strain>
    </source>
</reference>
<name>XPT_BREBN</name>